<accession>Q6UWV2</accession>
<accession>A8K025</accession>
<accession>B4DLD5</accession>
<accession>B4E2I8</accession>
<evidence type="ECO:0000250" key="1"/>
<evidence type="ECO:0000255" key="2"/>
<evidence type="ECO:0000255" key="3">
    <source>
        <dbReference type="PROSITE-ProRule" id="PRU00114"/>
    </source>
</evidence>
<evidence type="ECO:0000269" key="4">
    <source>
    </source>
</evidence>
<evidence type="ECO:0000303" key="5">
    <source>
    </source>
</evidence>
<evidence type="ECO:0000303" key="6">
    <source>
    </source>
</evidence>
<evidence type="ECO:0000305" key="7"/>
<comment type="function">
    <text evidence="1">Mediates homophilic cell-cell adhesion.</text>
</comment>
<comment type="interaction">
    <interactant intactId="EBI-4314854">
        <id>Q6UWV2</id>
    </interactant>
    <interactant intactId="EBI-3906725">
        <id>O60487</id>
        <label>MPZL2</label>
    </interactant>
    <organismsDiffer>false</organismsDiffer>
    <experiments>3</experiments>
</comment>
<comment type="subcellular location">
    <subcellularLocation>
        <location evidence="7">Membrane</location>
        <topology evidence="7">Single-pass type I membrane protein</topology>
    </subcellularLocation>
</comment>
<comment type="alternative products">
    <event type="alternative splicing"/>
    <isoform>
        <id>Q6UWV2-1</id>
        <name>1</name>
        <sequence type="displayed"/>
    </isoform>
    <isoform>
        <id>Q6UWV2-2</id>
        <name>2</name>
        <sequence type="described" ref="VSP_053988"/>
    </isoform>
    <isoform>
        <id>Q6UWV2-3</id>
        <name>3</name>
        <sequence type="described" ref="VSP_055324 VSP_055325"/>
    </isoform>
</comment>
<comment type="similarity">
    <text evidence="7">Belongs to the myelin P0 protein family.</text>
</comment>
<reference key="1">
    <citation type="journal article" date="2003" name="Genome Res.">
        <title>The secreted protein discovery initiative (SPDI), a large-scale effort to identify novel human secreted and transmembrane proteins: a bioinformatics assessment.</title>
        <authorList>
            <person name="Clark H.F."/>
            <person name="Gurney A.L."/>
            <person name="Abaya E."/>
            <person name="Baker K."/>
            <person name="Baldwin D.T."/>
            <person name="Brush J."/>
            <person name="Chen J."/>
            <person name="Chow B."/>
            <person name="Chui C."/>
            <person name="Crowley C."/>
            <person name="Currell B."/>
            <person name="Deuel B."/>
            <person name="Dowd P."/>
            <person name="Eaton D."/>
            <person name="Foster J.S."/>
            <person name="Grimaldi C."/>
            <person name="Gu Q."/>
            <person name="Hass P.E."/>
            <person name="Heldens S."/>
            <person name="Huang A."/>
            <person name="Kim H.S."/>
            <person name="Klimowski L."/>
            <person name="Jin Y."/>
            <person name="Johnson S."/>
            <person name="Lee J."/>
            <person name="Lewis L."/>
            <person name="Liao D."/>
            <person name="Mark M.R."/>
            <person name="Robbie E."/>
            <person name="Sanchez C."/>
            <person name="Schoenfeld J."/>
            <person name="Seshagiri S."/>
            <person name="Simmons L."/>
            <person name="Singh J."/>
            <person name="Smith V."/>
            <person name="Stinson J."/>
            <person name="Vagts A."/>
            <person name="Vandlen R.L."/>
            <person name="Watanabe C."/>
            <person name="Wieand D."/>
            <person name="Woods K."/>
            <person name="Xie M.-H."/>
            <person name="Yansura D.G."/>
            <person name="Yi S."/>
            <person name="Yu G."/>
            <person name="Yuan J."/>
            <person name="Zhang M."/>
            <person name="Zhang Z."/>
            <person name="Goddard A.D."/>
            <person name="Wood W.I."/>
            <person name="Godowski P.J."/>
            <person name="Gray A.M."/>
        </authorList>
    </citation>
    <scope>NUCLEOTIDE SEQUENCE [LARGE SCALE MRNA] (ISOFORM 1)</scope>
</reference>
<reference key="2">
    <citation type="journal article" date="2004" name="Nat. Genet.">
        <title>Complete sequencing and characterization of 21,243 full-length human cDNAs.</title>
        <authorList>
            <person name="Ota T."/>
            <person name="Suzuki Y."/>
            <person name="Nishikawa T."/>
            <person name="Otsuki T."/>
            <person name="Sugiyama T."/>
            <person name="Irie R."/>
            <person name="Wakamatsu A."/>
            <person name="Hayashi K."/>
            <person name="Sato H."/>
            <person name="Nagai K."/>
            <person name="Kimura K."/>
            <person name="Makita H."/>
            <person name="Sekine M."/>
            <person name="Obayashi M."/>
            <person name="Nishi T."/>
            <person name="Shibahara T."/>
            <person name="Tanaka T."/>
            <person name="Ishii S."/>
            <person name="Yamamoto J."/>
            <person name="Saito K."/>
            <person name="Kawai Y."/>
            <person name="Isono Y."/>
            <person name="Nakamura Y."/>
            <person name="Nagahari K."/>
            <person name="Murakami K."/>
            <person name="Yasuda T."/>
            <person name="Iwayanagi T."/>
            <person name="Wagatsuma M."/>
            <person name="Shiratori A."/>
            <person name="Sudo H."/>
            <person name="Hosoiri T."/>
            <person name="Kaku Y."/>
            <person name="Kodaira H."/>
            <person name="Kondo H."/>
            <person name="Sugawara M."/>
            <person name="Takahashi M."/>
            <person name="Kanda K."/>
            <person name="Yokoi T."/>
            <person name="Furuya T."/>
            <person name="Kikkawa E."/>
            <person name="Omura Y."/>
            <person name="Abe K."/>
            <person name="Kamihara K."/>
            <person name="Katsuta N."/>
            <person name="Sato K."/>
            <person name="Tanikawa M."/>
            <person name="Yamazaki M."/>
            <person name="Ninomiya K."/>
            <person name="Ishibashi T."/>
            <person name="Yamashita H."/>
            <person name="Murakawa K."/>
            <person name="Fujimori K."/>
            <person name="Tanai H."/>
            <person name="Kimata M."/>
            <person name="Watanabe M."/>
            <person name="Hiraoka S."/>
            <person name="Chiba Y."/>
            <person name="Ishida S."/>
            <person name="Ono Y."/>
            <person name="Takiguchi S."/>
            <person name="Watanabe S."/>
            <person name="Yosida M."/>
            <person name="Hotuta T."/>
            <person name="Kusano J."/>
            <person name="Kanehori K."/>
            <person name="Takahashi-Fujii A."/>
            <person name="Hara H."/>
            <person name="Tanase T.-O."/>
            <person name="Nomura Y."/>
            <person name="Togiya S."/>
            <person name="Komai F."/>
            <person name="Hara R."/>
            <person name="Takeuchi K."/>
            <person name="Arita M."/>
            <person name="Imose N."/>
            <person name="Musashino K."/>
            <person name="Yuuki H."/>
            <person name="Oshima A."/>
            <person name="Sasaki N."/>
            <person name="Aotsuka S."/>
            <person name="Yoshikawa Y."/>
            <person name="Matsunawa H."/>
            <person name="Ichihara T."/>
            <person name="Shiohata N."/>
            <person name="Sano S."/>
            <person name="Moriya S."/>
            <person name="Momiyama H."/>
            <person name="Satoh N."/>
            <person name="Takami S."/>
            <person name="Terashima Y."/>
            <person name="Suzuki O."/>
            <person name="Nakagawa S."/>
            <person name="Senoh A."/>
            <person name="Mizoguchi H."/>
            <person name="Goto Y."/>
            <person name="Shimizu F."/>
            <person name="Wakebe H."/>
            <person name="Hishigaki H."/>
            <person name="Watanabe T."/>
            <person name="Sugiyama A."/>
            <person name="Takemoto M."/>
            <person name="Kawakami B."/>
            <person name="Yamazaki M."/>
            <person name="Watanabe K."/>
            <person name="Kumagai A."/>
            <person name="Itakura S."/>
            <person name="Fukuzumi Y."/>
            <person name="Fujimori Y."/>
            <person name="Komiyama M."/>
            <person name="Tashiro H."/>
            <person name="Tanigami A."/>
            <person name="Fujiwara T."/>
            <person name="Ono T."/>
            <person name="Yamada K."/>
            <person name="Fujii Y."/>
            <person name="Ozaki K."/>
            <person name="Hirao M."/>
            <person name="Ohmori Y."/>
            <person name="Kawabata A."/>
            <person name="Hikiji T."/>
            <person name="Kobatake N."/>
            <person name="Inagaki H."/>
            <person name="Ikema Y."/>
            <person name="Okamoto S."/>
            <person name="Okitani R."/>
            <person name="Kawakami T."/>
            <person name="Noguchi S."/>
            <person name="Itoh T."/>
            <person name="Shigeta K."/>
            <person name="Senba T."/>
            <person name="Matsumura K."/>
            <person name="Nakajima Y."/>
            <person name="Mizuno T."/>
            <person name="Morinaga M."/>
            <person name="Sasaki M."/>
            <person name="Togashi T."/>
            <person name="Oyama M."/>
            <person name="Hata H."/>
            <person name="Watanabe M."/>
            <person name="Komatsu T."/>
            <person name="Mizushima-Sugano J."/>
            <person name="Satoh T."/>
            <person name="Shirai Y."/>
            <person name="Takahashi Y."/>
            <person name="Nakagawa K."/>
            <person name="Okumura K."/>
            <person name="Nagase T."/>
            <person name="Nomura N."/>
            <person name="Kikuchi H."/>
            <person name="Masuho Y."/>
            <person name="Yamashita R."/>
            <person name="Nakai K."/>
            <person name="Yada T."/>
            <person name="Nakamura Y."/>
            <person name="Ohara O."/>
            <person name="Isogai T."/>
            <person name="Sugano S."/>
        </authorList>
    </citation>
    <scope>NUCLEOTIDE SEQUENCE [LARGE SCALE MRNA] (ISOFORMS 1; 2 AND 3)</scope>
    <source>
        <tissue>Tongue</tissue>
        <tissue>Trachea</tissue>
    </source>
</reference>
<reference key="3">
    <citation type="journal article" date="2006" name="Nature">
        <title>Human chromosome 11 DNA sequence and analysis including novel gene identification.</title>
        <authorList>
            <person name="Taylor T.D."/>
            <person name="Noguchi H."/>
            <person name="Totoki Y."/>
            <person name="Toyoda A."/>
            <person name="Kuroki Y."/>
            <person name="Dewar K."/>
            <person name="Lloyd C."/>
            <person name="Itoh T."/>
            <person name="Takeda T."/>
            <person name="Kim D.-W."/>
            <person name="She X."/>
            <person name="Barlow K.F."/>
            <person name="Bloom T."/>
            <person name="Bruford E."/>
            <person name="Chang J.L."/>
            <person name="Cuomo C.A."/>
            <person name="Eichler E."/>
            <person name="FitzGerald M.G."/>
            <person name="Jaffe D.B."/>
            <person name="LaButti K."/>
            <person name="Nicol R."/>
            <person name="Park H.-S."/>
            <person name="Seaman C."/>
            <person name="Sougnez C."/>
            <person name="Yang X."/>
            <person name="Zimmer A.R."/>
            <person name="Zody M.C."/>
            <person name="Birren B.W."/>
            <person name="Nusbaum C."/>
            <person name="Fujiyama A."/>
            <person name="Hattori M."/>
            <person name="Rogers J."/>
            <person name="Lander E.S."/>
            <person name="Sakaki Y."/>
        </authorList>
    </citation>
    <scope>NUCLEOTIDE SEQUENCE [LARGE SCALE GENOMIC DNA]</scope>
</reference>
<reference key="4">
    <citation type="submission" date="2005-07" db="EMBL/GenBank/DDBJ databases">
        <authorList>
            <person name="Mural R.J."/>
            <person name="Istrail S."/>
            <person name="Sutton G."/>
            <person name="Florea L."/>
            <person name="Halpern A.L."/>
            <person name="Mobarry C.M."/>
            <person name="Lippert R."/>
            <person name="Walenz B."/>
            <person name="Shatkay H."/>
            <person name="Dew I."/>
            <person name="Miller J.R."/>
            <person name="Flanigan M.J."/>
            <person name="Edwards N.J."/>
            <person name="Bolanos R."/>
            <person name="Fasulo D."/>
            <person name="Halldorsson B.V."/>
            <person name="Hannenhalli S."/>
            <person name="Turner R."/>
            <person name="Yooseph S."/>
            <person name="Lu F."/>
            <person name="Nusskern D.R."/>
            <person name="Shue B.C."/>
            <person name="Zheng X.H."/>
            <person name="Zhong F."/>
            <person name="Delcher A.L."/>
            <person name="Huson D.H."/>
            <person name="Kravitz S.A."/>
            <person name="Mouchard L."/>
            <person name="Reinert K."/>
            <person name="Remington K.A."/>
            <person name="Clark A.G."/>
            <person name="Waterman M.S."/>
            <person name="Eichler E.E."/>
            <person name="Adams M.D."/>
            <person name="Hunkapiller M.W."/>
            <person name="Myers E.W."/>
            <person name="Venter J.C."/>
        </authorList>
    </citation>
    <scope>NUCLEOTIDE SEQUENCE [LARGE SCALE GENOMIC DNA]</scope>
</reference>
<reference key="5">
    <citation type="journal article" date="2004" name="Genome Res.">
        <title>The status, quality, and expansion of the NIH full-length cDNA project: the Mammalian Gene Collection (MGC).</title>
        <authorList>
            <consortium name="The MGC Project Team"/>
        </authorList>
    </citation>
    <scope>NUCLEOTIDE SEQUENCE [LARGE SCALE MRNA] (ISOFORMS 1 AND 2)</scope>
    <source>
        <tissue>Colon</tissue>
    </source>
</reference>
<reference key="6">
    <citation type="journal article" date="2004" name="Protein Sci.">
        <title>Signal peptide prediction based on analysis of experimentally verified cleavage sites.</title>
        <authorList>
            <person name="Zhang Z."/>
            <person name="Henzel W.J."/>
        </authorList>
    </citation>
    <scope>PROTEIN SEQUENCE OF 32-46</scope>
</reference>
<name>MPZL3_HUMAN</name>
<organism>
    <name type="scientific">Homo sapiens</name>
    <name type="common">Human</name>
    <dbReference type="NCBI Taxonomy" id="9606"/>
    <lineage>
        <taxon>Eukaryota</taxon>
        <taxon>Metazoa</taxon>
        <taxon>Chordata</taxon>
        <taxon>Craniata</taxon>
        <taxon>Vertebrata</taxon>
        <taxon>Euteleostomi</taxon>
        <taxon>Mammalia</taxon>
        <taxon>Eutheria</taxon>
        <taxon>Euarchontoglires</taxon>
        <taxon>Primates</taxon>
        <taxon>Haplorrhini</taxon>
        <taxon>Catarrhini</taxon>
        <taxon>Hominidae</taxon>
        <taxon>Homo</taxon>
    </lineage>
</organism>
<dbReference type="EMBL" id="AY358626">
    <property type="protein sequence ID" value="AAQ88989.1"/>
    <property type="molecule type" value="mRNA"/>
</dbReference>
<dbReference type="EMBL" id="AK289390">
    <property type="protein sequence ID" value="BAF82079.1"/>
    <property type="molecule type" value="mRNA"/>
</dbReference>
<dbReference type="EMBL" id="AK095399">
    <property type="protein sequence ID" value="BAG53045.1"/>
    <property type="molecule type" value="mRNA"/>
</dbReference>
<dbReference type="EMBL" id="AK296951">
    <property type="protein sequence ID" value="BAG59497.1"/>
    <property type="molecule type" value="mRNA"/>
</dbReference>
<dbReference type="EMBL" id="AK304292">
    <property type="protein sequence ID" value="BAG65150.1"/>
    <property type="molecule type" value="mRNA"/>
</dbReference>
<dbReference type="EMBL" id="AP002800">
    <property type="status" value="NOT_ANNOTATED_CDS"/>
    <property type="molecule type" value="Genomic_DNA"/>
</dbReference>
<dbReference type="EMBL" id="CH471065">
    <property type="protein sequence ID" value="EAW67357.1"/>
    <property type="molecule type" value="Genomic_DNA"/>
</dbReference>
<dbReference type="EMBL" id="BC113586">
    <property type="protein sequence ID" value="AAI13587.1"/>
    <property type="molecule type" value="mRNA"/>
</dbReference>
<dbReference type="EMBL" id="BC143897">
    <property type="protein sequence ID" value="AAI43898.1"/>
    <property type="molecule type" value="mRNA"/>
</dbReference>
<dbReference type="CCDS" id="CCDS66241.1">
    <molecule id="Q6UWV2-2"/>
</dbReference>
<dbReference type="CCDS" id="CCDS8392.1">
    <molecule id="Q6UWV2-1"/>
</dbReference>
<dbReference type="RefSeq" id="NP_001273081.1">
    <molecule id="Q6UWV2-2"/>
    <property type="nucleotide sequence ID" value="NM_001286152.2"/>
</dbReference>
<dbReference type="RefSeq" id="NP_938016.1">
    <molecule id="Q6UWV2-1"/>
    <property type="nucleotide sequence ID" value="NM_198275.3"/>
</dbReference>
<dbReference type="SMR" id="Q6UWV2"/>
<dbReference type="BioGRID" id="128193">
    <property type="interactions" value="5"/>
</dbReference>
<dbReference type="FunCoup" id="Q6UWV2">
    <property type="interactions" value="455"/>
</dbReference>
<dbReference type="IntAct" id="Q6UWV2">
    <property type="interactions" value="4"/>
</dbReference>
<dbReference type="STRING" id="9606.ENSP00000278949"/>
<dbReference type="GlyCosmos" id="Q6UWV2">
    <property type="glycosylation" value="1 site, No reported glycans"/>
</dbReference>
<dbReference type="GlyGen" id="Q6UWV2">
    <property type="glycosylation" value="1 site, 3 N-linked glycans (1 site)"/>
</dbReference>
<dbReference type="iPTMnet" id="Q6UWV2"/>
<dbReference type="PhosphoSitePlus" id="Q6UWV2"/>
<dbReference type="SwissPalm" id="Q6UWV2"/>
<dbReference type="BioMuta" id="MPZL3"/>
<dbReference type="DMDM" id="74758560"/>
<dbReference type="jPOST" id="Q6UWV2"/>
<dbReference type="MassIVE" id="Q6UWV2"/>
<dbReference type="PaxDb" id="9606-ENSP00000278949"/>
<dbReference type="PeptideAtlas" id="Q6UWV2"/>
<dbReference type="Antibodypedia" id="32439">
    <property type="antibodies" value="87 antibodies from 17 providers"/>
</dbReference>
<dbReference type="DNASU" id="196264"/>
<dbReference type="Ensembl" id="ENST00000278949.9">
    <molecule id="Q6UWV2-1"/>
    <property type="protein sequence ID" value="ENSP00000278949.4"/>
    <property type="gene ID" value="ENSG00000160588.10"/>
</dbReference>
<dbReference type="Ensembl" id="ENST00000446386.2">
    <molecule id="Q6UWV2-3"/>
    <property type="protein sequence ID" value="ENSP00000393594.2"/>
    <property type="gene ID" value="ENSG00000160588.10"/>
</dbReference>
<dbReference type="Ensembl" id="ENST00000527472.1">
    <molecule id="Q6UWV2-2"/>
    <property type="protein sequence ID" value="ENSP00000432106.1"/>
    <property type="gene ID" value="ENSG00000160588.10"/>
</dbReference>
<dbReference type="GeneID" id="196264"/>
<dbReference type="KEGG" id="hsa:196264"/>
<dbReference type="MANE-Select" id="ENST00000278949.9">
    <property type="protein sequence ID" value="ENSP00000278949.4"/>
    <property type="RefSeq nucleotide sequence ID" value="NM_198275.3"/>
    <property type="RefSeq protein sequence ID" value="NP_938016.1"/>
</dbReference>
<dbReference type="UCSC" id="uc001psm.5">
    <molecule id="Q6UWV2-1"/>
    <property type="organism name" value="human"/>
</dbReference>
<dbReference type="AGR" id="HGNC:27279"/>
<dbReference type="CTD" id="196264"/>
<dbReference type="DisGeNET" id="196264"/>
<dbReference type="GeneCards" id="MPZL3"/>
<dbReference type="HGNC" id="HGNC:27279">
    <property type="gene designation" value="MPZL3"/>
</dbReference>
<dbReference type="HPA" id="ENSG00000160588">
    <property type="expression patterns" value="Tissue enhanced (esophagus, skin)"/>
</dbReference>
<dbReference type="MIM" id="611707">
    <property type="type" value="gene"/>
</dbReference>
<dbReference type="neXtProt" id="NX_Q6UWV2"/>
<dbReference type="OpenTargets" id="ENSG00000160588"/>
<dbReference type="PharmGKB" id="PA162396160"/>
<dbReference type="VEuPathDB" id="HostDB:ENSG00000160588"/>
<dbReference type="eggNOG" id="ENOG502RYH4">
    <property type="taxonomic scope" value="Eukaryota"/>
</dbReference>
<dbReference type="GeneTree" id="ENSGT01030000234556"/>
<dbReference type="HOGENOM" id="CLU_090350_1_0_1"/>
<dbReference type="InParanoid" id="Q6UWV2"/>
<dbReference type="OMA" id="WCLNCVD"/>
<dbReference type="OrthoDB" id="8916449at2759"/>
<dbReference type="PAN-GO" id="Q6UWV2">
    <property type="GO annotations" value="1 GO annotation based on evolutionary models"/>
</dbReference>
<dbReference type="PhylomeDB" id="Q6UWV2"/>
<dbReference type="TreeFam" id="TF331728"/>
<dbReference type="PathwayCommons" id="Q6UWV2"/>
<dbReference type="SignaLink" id="Q6UWV2"/>
<dbReference type="BioGRID-ORCS" id="196264">
    <property type="hits" value="9 hits in 1149 CRISPR screens"/>
</dbReference>
<dbReference type="ChiTaRS" id="MPZL3">
    <property type="organism name" value="human"/>
</dbReference>
<dbReference type="GenomeRNAi" id="196264"/>
<dbReference type="Pharos" id="Q6UWV2">
    <property type="development level" value="Tbio"/>
</dbReference>
<dbReference type="PRO" id="PR:Q6UWV2"/>
<dbReference type="Proteomes" id="UP000005640">
    <property type="component" value="Chromosome 11"/>
</dbReference>
<dbReference type="RNAct" id="Q6UWV2">
    <property type="molecule type" value="protein"/>
</dbReference>
<dbReference type="Bgee" id="ENSG00000160588">
    <property type="expression patterns" value="Expressed in buccal mucosa cell and 137 other cell types or tissues"/>
</dbReference>
<dbReference type="ExpressionAtlas" id="Q6UWV2">
    <property type="expression patterns" value="baseline and differential"/>
</dbReference>
<dbReference type="GO" id="GO:0005886">
    <property type="term" value="C:plasma membrane"/>
    <property type="evidence" value="ECO:0000318"/>
    <property type="project" value="GO_Central"/>
</dbReference>
<dbReference type="GO" id="GO:0007155">
    <property type="term" value="P:cell adhesion"/>
    <property type="evidence" value="ECO:0007669"/>
    <property type="project" value="UniProtKB-KW"/>
</dbReference>
<dbReference type="GO" id="GO:0030198">
    <property type="term" value="P:extracellular matrix organization"/>
    <property type="evidence" value="ECO:0007669"/>
    <property type="project" value="Ensembl"/>
</dbReference>
<dbReference type="GO" id="GO:0042633">
    <property type="term" value="P:hair cycle"/>
    <property type="evidence" value="ECO:0007669"/>
    <property type="project" value="Ensembl"/>
</dbReference>
<dbReference type="FunFam" id="2.60.40.10:FF:000193">
    <property type="entry name" value="Myelin protein zero-like 1 like"/>
    <property type="match status" value="1"/>
</dbReference>
<dbReference type="Gene3D" id="2.60.40.10">
    <property type="entry name" value="Immunoglobulins"/>
    <property type="match status" value="1"/>
</dbReference>
<dbReference type="InterPro" id="IPR007110">
    <property type="entry name" value="Ig-like_dom"/>
</dbReference>
<dbReference type="InterPro" id="IPR036179">
    <property type="entry name" value="Ig-like_dom_sf"/>
</dbReference>
<dbReference type="InterPro" id="IPR013783">
    <property type="entry name" value="Ig-like_fold"/>
</dbReference>
<dbReference type="InterPro" id="IPR003599">
    <property type="entry name" value="Ig_sub"/>
</dbReference>
<dbReference type="InterPro" id="IPR013106">
    <property type="entry name" value="Ig_V-set"/>
</dbReference>
<dbReference type="InterPro" id="IPR000920">
    <property type="entry name" value="Myelin_P0-rel"/>
</dbReference>
<dbReference type="PANTHER" id="PTHR13869">
    <property type="entry name" value="MYELIN P0 RELATED"/>
    <property type="match status" value="1"/>
</dbReference>
<dbReference type="PANTHER" id="PTHR13869:SF20">
    <property type="entry name" value="MYELIN PROTEIN ZERO-LIKE PROTEIN 3"/>
    <property type="match status" value="1"/>
</dbReference>
<dbReference type="Pfam" id="PF07686">
    <property type="entry name" value="V-set"/>
    <property type="match status" value="1"/>
</dbReference>
<dbReference type="PRINTS" id="PR00213">
    <property type="entry name" value="MYELINP0"/>
</dbReference>
<dbReference type="SMART" id="SM00409">
    <property type="entry name" value="IG"/>
    <property type="match status" value="1"/>
</dbReference>
<dbReference type="SMART" id="SM00406">
    <property type="entry name" value="IGv"/>
    <property type="match status" value="1"/>
</dbReference>
<dbReference type="SUPFAM" id="SSF48726">
    <property type="entry name" value="Immunoglobulin"/>
    <property type="match status" value="1"/>
</dbReference>
<dbReference type="PROSITE" id="PS50835">
    <property type="entry name" value="IG_LIKE"/>
    <property type="match status" value="1"/>
</dbReference>
<proteinExistence type="evidence at protein level"/>
<gene>
    <name type="primary">MPZL3</name>
    <name type="ORF">UNQ2966/PRO7425</name>
</gene>
<keyword id="KW-0025">Alternative splicing</keyword>
<keyword id="KW-0130">Cell adhesion</keyword>
<keyword id="KW-0903">Direct protein sequencing</keyword>
<keyword id="KW-1015">Disulfide bond</keyword>
<keyword id="KW-0325">Glycoprotein</keyword>
<keyword id="KW-0393">Immunoglobulin domain</keyword>
<keyword id="KW-0472">Membrane</keyword>
<keyword id="KW-1267">Proteomics identification</keyword>
<keyword id="KW-1185">Reference proteome</keyword>
<keyword id="KW-0732">Signal</keyword>
<keyword id="KW-0812">Transmembrane</keyword>
<keyword id="KW-1133">Transmembrane helix</keyword>
<protein>
    <recommendedName>
        <fullName>Myelin protein zero-like protein 3</fullName>
    </recommendedName>
</protein>
<feature type="signal peptide" evidence="4">
    <location>
        <begin position="1"/>
        <end position="31"/>
    </location>
</feature>
<feature type="chain" id="PRO_0000280282" description="Myelin protein zero-like protein 3">
    <location>
        <begin position="32"/>
        <end position="235"/>
    </location>
</feature>
<feature type="topological domain" description="Extracellular" evidence="2">
    <location>
        <begin position="32"/>
        <end position="158"/>
    </location>
</feature>
<feature type="transmembrane region" description="Helical" evidence="2">
    <location>
        <begin position="159"/>
        <end position="179"/>
    </location>
</feature>
<feature type="topological domain" description="Cytoplasmic" evidence="2">
    <location>
        <begin position="180"/>
        <end position="235"/>
    </location>
</feature>
<feature type="domain" description="Ig-like V-type">
    <location>
        <begin position="32"/>
        <end position="148"/>
    </location>
</feature>
<feature type="glycosylation site" description="N-linked (GlcNAc...) asparagine" evidence="2">
    <location>
        <position position="123"/>
    </location>
</feature>
<feature type="disulfide bond" evidence="3">
    <location>
        <begin position="52"/>
        <end position="128"/>
    </location>
</feature>
<feature type="splice variant" id="VSP_053988" description="In isoform 2." evidence="5 6">
    <location>
        <begin position="25"/>
        <end position="36"/>
    </location>
</feature>
<feature type="splice variant" id="VSP_055324" description="In isoform 3." evidence="5">
    <original>IFHYQSFQYPTTAGTFRDRISWVGNVYK</original>
    <variation>VLAPCFPLWPFFPSLSLCPQPWWLLCCW</variation>
    <location>
        <begin position="81"/>
        <end position="108"/>
    </location>
</feature>
<feature type="splice variant" id="VSP_055325" description="In isoform 3." evidence="5">
    <location>
        <begin position="109"/>
        <end position="235"/>
    </location>
</feature>
<feature type="sequence variant" id="VAR_031108" description="In dbSNP:rs17121966.">
    <original>M</original>
    <variation>V</variation>
    <location>
        <position position="155"/>
    </location>
</feature>
<feature type="sequence variant" id="VAR_050455" description="In dbSNP:rs36102742.">
    <original>V</original>
    <variation>G</variation>
    <location>
        <position position="168"/>
    </location>
</feature>
<feature type="sequence variant" id="VAR_050456" description="In dbSNP:rs34507994.">
    <original>V</original>
    <variation>M</variation>
    <location>
        <position position="172"/>
    </location>
</feature>
<feature type="sequence variant" id="VAR_031109" description="In dbSNP:rs7105729.">
    <original>D</original>
    <variation>V</variation>
    <location>
        <position position="228"/>
    </location>
</feature>
<sequence length="235" mass="25989">MQQRGAAGSRGCALFPLLGVLFFQGVYIVFSLEIRADAHVRGYVGEKIKLKCTFKSTSDVTDKLTIDWTYRPPSSSHTVSIFHYQSFQYPTTAGTFRDRISWVGNVYKGDASISISNPTIKDNGTFSCAVKNPPDVHHNIPMTELTVTERGFGTMLSSVALLSILVFVPSAVVVALLLVRMGRKAAGLKKRSRSGYKKSSIEVSDDTDQEEEEACMARLCVRCAECLDSDYEETY</sequence>